<comment type="function">
    <text evidence="1">One of the primary rRNA binding proteins. Required for association of the 30S and 50S subunits to form the 70S ribosome, for tRNA binding and peptide bond formation. It has been suggested to have peptidyltransferase activity; this is somewhat controversial. Makes several contacts with the 16S rRNA in the 70S ribosome.</text>
</comment>
<comment type="subunit">
    <text evidence="1">Part of the 50S ribosomal subunit. Forms a bridge to the 30S subunit in the 70S ribosome.</text>
</comment>
<comment type="similarity">
    <text evidence="1">Belongs to the universal ribosomal protein uL2 family.</text>
</comment>
<proteinExistence type="inferred from homology"/>
<evidence type="ECO:0000255" key="1">
    <source>
        <dbReference type="HAMAP-Rule" id="MF_01320"/>
    </source>
</evidence>
<evidence type="ECO:0000256" key="2">
    <source>
        <dbReference type="SAM" id="MobiDB-lite"/>
    </source>
</evidence>
<evidence type="ECO:0000305" key="3"/>
<gene>
    <name evidence="1" type="primary">rplB</name>
    <name type="ordered locus">RER_18550</name>
</gene>
<protein>
    <recommendedName>
        <fullName evidence="1">Large ribosomal subunit protein uL2</fullName>
    </recommendedName>
    <alternativeName>
        <fullName evidence="3">50S ribosomal protein L2</fullName>
    </alternativeName>
</protein>
<reference key="1">
    <citation type="submission" date="2005-03" db="EMBL/GenBank/DDBJ databases">
        <title>Comparison of the complete genome sequences of Rhodococcus erythropolis PR4 and Rhodococcus opacus B4.</title>
        <authorList>
            <person name="Takarada H."/>
            <person name="Sekine M."/>
            <person name="Hosoyama A."/>
            <person name="Yamada R."/>
            <person name="Fujisawa T."/>
            <person name="Omata S."/>
            <person name="Shimizu A."/>
            <person name="Tsukatani N."/>
            <person name="Tanikawa S."/>
            <person name="Fujita N."/>
            <person name="Harayama S."/>
        </authorList>
    </citation>
    <scope>NUCLEOTIDE SEQUENCE [LARGE SCALE GENOMIC DNA]</scope>
    <source>
        <strain>PR4 / NBRC 100887</strain>
    </source>
</reference>
<sequence>MAIRKYKPTTPGRRGSSVSDFAEITRSTPEKSLVRPLHGRGGRNAHGRITTRHKGGGHKRAYRLIDFRRNDKDGIPAKVAHIEYDPNRTANIALLHYADGEKRYIIAPKGLVQGSPVESGAGADIKPGNNLPLRNIPTGTTIHGVELRPGGGAKMARSAGASIQLLGKEGSYATLRMPSGEIRRVDVRCRASVGEVGNAEQSNINWGKAGRMRWKGKRPTVRGVVMNPVDHPHGGGEGKTSGGRHPVSPWGKPEGRTRKNKASDKMIVRRRRTGKNKR</sequence>
<keyword id="KW-0687">Ribonucleoprotein</keyword>
<keyword id="KW-0689">Ribosomal protein</keyword>
<keyword id="KW-0694">RNA-binding</keyword>
<keyword id="KW-0699">rRNA-binding</keyword>
<organism>
    <name type="scientific">Rhodococcus erythropolis (strain PR4 / NBRC 100887)</name>
    <dbReference type="NCBI Taxonomy" id="234621"/>
    <lineage>
        <taxon>Bacteria</taxon>
        <taxon>Bacillati</taxon>
        <taxon>Actinomycetota</taxon>
        <taxon>Actinomycetes</taxon>
        <taxon>Mycobacteriales</taxon>
        <taxon>Nocardiaceae</taxon>
        <taxon>Rhodococcus</taxon>
        <taxon>Rhodococcus erythropolis group</taxon>
    </lineage>
</organism>
<name>RL2_RHOE4</name>
<feature type="chain" id="PRO_1000214456" description="Large ribosomal subunit protein uL2">
    <location>
        <begin position="1"/>
        <end position="278"/>
    </location>
</feature>
<feature type="region of interest" description="Disordered" evidence="2">
    <location>
        <begin position="1"/>
        <end position="58"/>
    </location>
</feature>
<feature type="region of interest" description="Disordered" evidence="2">
    <location>
        <begin position="225"/>
        <end position="278"/>
    </location>
</feature>
<feature type="compositionally biased region" description="Basic residues" evidence="2">
    <location>
        <begin position="37"/>
        <end position="58"/>
    </location>
</feature>
<feature type="compositionally biased region" description="Basic and acidic residues" evidence="2">
    <location>
        <begin position="253"/>
        <end position="267"/>
    </location>
</feature>
<feature type="compositionally biased region" description="Basic residues" evidence="2">
    <location>
        <begin position="268"/>
        <end position="278"/>
    </location>
</feature>
<dbReference type="EMBL" id="AP008957">
    <property type="protein sequence ID" value="BAH32563.1"/>
    <property type="molecule type" value="Genomic_DNA"/>
</dbReference>
<dbReference type="RefSeq" id="WP_003940895.1">
    <property type="nucleotide sequence ID" value="NC_012490.1"/>
</dbReference>
<dbReference type="SMR" id="C0ZW28"/>
<dbReference type="GeneID" id="93803301"/>
<dbReference type="KEGG" id="rer:RER_18550"/>
<dbReference type="eggNOG" id="COG0090">
    <property type="taxonomic scope" value="Bacteria"/>
</dbReference>
<dbReference type="HOGENOM" id="CLU_036235_2_1_11"/>
<dbReference type="Proteomes" id="UP000002204">
    <property type="component" value="Chromosome"/>
</dbReference>
<dbReference type="GO" id="GO:0015934">
    <property type="term" value="C:large ribosomal subunit"/>
    <property type="evidence" value="ECO:0007669"/>
    <property type="project" value="InterPro"/>
</dbReference>
<dbReference type="GO" id="GO:0019843">
    <property type="term" value="F:rRNA binding"/>
    <property type="evidence" value="ECO:0007669"/>
    <property type="project" value="UniProtKB-UniRule"/>
</dbReference>
<dbReference type="GO" id="GO:0003735">
    <property type="term" value="F:structural constituent of ribosome"/>
    <property type="evidence" value="ECO:0007669"/>
    <property type="project" value="InterPro"/>
</dbReference>
<dbReference type="GO" id="GO:0016740">
    <property type="term" value="F:transferase activity"/>
    <property type="evidence" value="ECO:0007669"/>
    <property type="project" value="InterPro"/>
</dbReference>
<dbReference type="GO" id="GO:0002181">
    <property type="term" value="P:cytoplasmic translation"/>
    <property type="evidence" value="ECO:0007669"/>
    <property type="project" value="TreeGrafter"/>
</dbReference>
<dbReference type="FunFam" id="2.30.30.30:FF:000001">
    <property type="entry name" value="50S ribosomal protein L2"/>
    <property type="match status" value="1"/>
</dbReference>
<dbReference type="FunFam" id="2.40.50.140:FF:000003">
    <property type="entry name" value="50S ribosomal protein L2"/>
    <property type="match status" value="1"/>
</dbReference>
<dbReference type="FunFam" id="4.10.950.10:FF:000001">
    <property type="entry name" value="50S ribosomal protein L2"/>
    <property type="match status" value="1"/>
</dbReference>
<dbReference type="Gene3D" id="2.30.30.30">
    <property type="match status" value="1"/>
</dbReference>
<dbReference type="Gene3D" id="2.40.50.140">
    <property type="entry name" value="Nucleic acid-binding proteins"/>
    <property type="match status" value="1"/>
</dbReference>
<dbReference type="Gene3D" id="4.10.950.10">
    <property type="entry name" value="Ribosomal protein L2, domain 3"/>
    <property type="match status" value="1"/>
</dbReference>
<dbReference type="HAMAP" id="MF_01320_B">
    <property type="entry name" value="Ribosomal_uL2_B"/>
    <property type="match status" value="1"/>
</dbReference>
<dbReference type="InterPro" id="IPR012340">
    <property type="entry name" value="NA-bd_OB-fold"/>
</dbReference>
<dbReference type="InterPro" id="IPR014722">
    <property type="entry name" value="Rib_uL2_dom2"/>
</dbReference>
<dbReference type="InterPro" id="IPR002171">
    <property type="entry name" value="Ribosomal_uL2"/>
</dbReference>
<dbReference type="InterPro" id="IPR005880">
    <property type="entry name" value="Ribosomal_uL2_bac/org-type"/>
</dbReference>
<dbReference type="InterPro" id="IPR022669">
    <property type="entry name" value="Ribosomal_uL2_C"/>
</dbReference>
<dbReference type="InterPro" id="IPR022671">
    <property type="entry name" value="Ribosomal_uL2_CS"/>
</dbReference>
<dbReference type="InterPro" id="IPR014726">
    <property type="entry name" value="Ribosomal_uL2_dom3"/>
</dbReference>
<dbReference type="InterPro" id="IPR022666">
    <property type="entry name" value="Ribosomal_uL2_RNA-bd_dom"/>
</dbReference>
<dbReference type="InterPro" id="IPR008991">
    <property type="entry name" value="Translation_prot_SH3-like_sf"/>
</dbReference>
<dbReference type="NCBIfam" id="TIGR01171">
    <property type="entry name" value="rplB_bact"/>
    <property type="match status" value="1"/>
</dbReference>
<dbReference type="PANTHER" id="PTHR13691:SF5">
    <property type="entry name" value="LARGE RIBOSOMAL SUBUNIT PROTEIN UL2M"/>
    <property type="match status" value="1"/>
</dbReference>
<dbReference type="PANTHER" id="PTHR13691">
    <property type="entry name" value="RIBOSOMAL PROTEIN L2"/>
    <property type="match status" value="1"/>
</dbReference>
<dbReference type="Pfam" id="PF00181">
    <property type="entry name" value="Ribosomal_L2"/>
    <property type="match status" value="1"/>
</dbReference>
<dbReference type="Pfam" id="PF03947">
    <property type="entry name" value="Ribosomal_L2_C"/>
    <property type="match status" value="1"/>
</dbReference>
<dbReference type="PIRSF" id="PIRSF002158">
    <property type="entry name" value="Ribosomal_L2"/>
    <property type="match status" value="1"/>
</dbReference>
<dbReference type="SMART" id="SM01383">
    <property type="entry name" value="Ribosomal_L2"/>
    <property type="match status" value="1"/>
</dbReference>
<dbReference type="SMART" id="SM01382">
    <property type="entry name" value="Ribosomal_L2_C"/>
    <property type="match status" value="1"/>
</dbReference>
<dbReference type="SUPFAM" id="SSF50249">
    <property type="entry name" value="Nucleic acid-binding proteins"/>
    <property type="match status" value="1"/>
</dbReference>
<dbReference type="SUPFAM" id="SSF50104">
    <property type="entry name" value="Translation proteins SH3-like domain"/>
    <property type="match status" value="1"/>
</dbReference>
<dbReference type="PROSITE" id="PS00467">
    <property type="entry name" value="RIBOSOMAL_L2"/>
    <property type="match status" value="1"/>
</dbReference>
<accession>C0ZW28</accession>